<organism>
    <name type="scientific">Mus musculus</name>
    <name type="common">Mouse</name>
    <dbReference type="NCBI Taxonomy" id="10090"/>
    <lineage>
        <taxon>Eukaryota</taxon>
        <taxon>Metazoa</taxon>
        <taxon>Chordata</taxon>
        <taxon>Craniata</taxon>
        <taxon>Vertebrata</taxon>
        <taxon>Euteleostomi</taxon>
        <taxon>Mammalia</taxon>
        <taxon>Eutheria</taxon>
        <taxon>Euarchontoglires</taxon>
        <taxon>Glires</taxon>
        <taxon>Rodentia</taxon>
        <taxon>Myomorpha</taxon>
        <taxon>Muroidea</taxon>
        <taxon>Muridae</taxon>
        <taxon>Murinae</taxon>
        <taxon>Mus</taxon>
        <taxon>Mus</taxon>
    </lineage>
</organism>
<protein>
    <recommendedName>
        <fullName evidence="6">Dual specificity protein phosphatase 2</fullName>
        <ecNumber evidence="4">3.1.3.16</ecNumber>
        <ecNumber evidence="3 4">3.1.3.48</ecNumber>
    </recommendedName>
    <alternativeName>
        <fullName>Dual specificity protein phosphatase PAC-1</fullName>
    </alternativeName>
</protein>
<sequence>MPIAMGLETACELECAALGALLREPREAERTLLLDCRPFLAFCRSHVRAARPVPWNALLRRRARGTPAAALACLLPDRALRARLGRGELARAVVLDESSASVAELPPDGPAHLLLAALQHEMRGGPTTVCFLRGGFKSFQTYCPDLCSEAPAQALPPAGAENSNSDPRVPIYDQGGPVEILPYLYLGSCNHSSDLQGLQACGITAVLNVSASCPNHFEGLFHYKSIPVEDNQMVEISAWFQEAISFIDSVKNSGGRVLVHCQAGISRSATICLAYLIQSHRVRLDEAFDFVKQRRGVISPNFSFMGQLLQLETQVLCH</sequence>
<accession>Q05922</accession>
<accession>Q60640</accession>
<accession>Q80ZN1</accession>
<gene>
    <name evidence="8" type="primary">Dusp2</name>
    <name type="synonym">Pac-1</name>
    <name type="synonym">Pac1</name>
</gene>
<proteinExistence type="evidence at protein level"/>
<comment type="function">
    <text evidence="4">Dephosphorylates both phosphorylated Thr and Tyr residues in MAPK1, and dephosphorylation of phosphotyrosine is slightly faster than that of phosphothreonine (PubMed:16288922). Can dephosphorylate MAPK1 (PubMed:16288922).</text>
</comment>
<comment type="catalytic activity">
    <reaction evidence="3 4">
        <text>O-phospho-L-tyrosyl-[protein] + H2O = L-tyrosyl-[protein] + phosphate</text>
        <dbReference type="Rhea" id="RHEA:10684"/>
        <dbReference type="Rhea" id="RHEA-COMP:10136"/>
        <dbReference type="Rhea" id="RHEA-COMP:20101"/>
        <dbReference type="ChEBI" id="CHEBI:15377"/>
        <dbReference type="ChEBI" id="CHEBI:43474"/>
        <dbReference type="ChEBI" id="CHEBI:46858"/>
        <dbReference type="ChEBI" id="CHEBI:61978"/>
        <dbReference type="EC" id="3.1.3.48"/>
    </reaction>
    <physiologicalReaction direction="left-to-right" evidence="7">
        <dbReference type="Rhea" id="RHEA:10685"/>
    </physiologicalReaction>
</comment>
<comment type="catalytic activity">
    <reaction evidence="4">
        <text>O-phospho-L-threonyl-[protein] + H2O = L-threonyl-[protein] + phosphate</text>
        <dbReference type="Rhea" id="RHEA:47004"/>
        <dbReference type="Rhea" id="RHEA-COMP:11060"/>
        <dbReference type="Rhea" id="RHEA-COMP:11605"/>
        <dbReference type="ChEBI" id="CHEBI:15377"/>
        <dbReference type="ChEBI" id="CHEBI:30013"/>
        <dbReference type="ChEBI" id="CHEBI:43474"/>
        <dbReference type="ChEBI" id="CHEBI:61977"/>
        <dbReference type="EC" id="3.1.3.16"/>
    </reaction>
    <physiologicalReaction direction="left-to-right" evidence="7">
        <dbReference type="Rhea" id="RHEA:47005"/>
    </physiologicalReaction>
</comment>
<comment type="subunit">
    <text evidence="4">Interacts with MAPK14; this interaction does not lead to catalytic activation of DUSP2 and dephosphrylation of MAPK14.</text>
</comment>
<comment type="interaction">
    <interactant intactId="EBI-7898692">
        <id>Q05922</id>
    </interactant>
    <interactant intactId="EBI-959949">
        <id>P28482</id>
        <label>MAPK1</label>
    </interactant>
    <organismsDiffer>true</organismsDiffer>
    <experiments>2</experiments>
</comment>
<comment type="subcellular location">
    <subcellularLocation>
        <location>Nucleus</location>
    </subcellularLocation>
</comment>
<comment type="alternative products">
    <event type="alternative splicing"/>
    <isoform>
        <id>Q05922-1</id>
        <name>1</name>
        <name>Long</name>
        <sequence type="displayed"/>
    </isoform>
    <isoform>
        <id>Q05922-2</id>
        <name>2</name>
        <name>Short</name>
        <sequence type="described" ref="VSP_005135 VSP_005136"/>
    </isoform>
</comment>
<comment type="tissue specificity">
    <text>In hematopoietic tissues such as spleen and thymus.</text>
</comment>
<comment type="induction">
    <text>By mitogens.</text>
</comment>
<comment type="similarity">
    <text evidence="6">Belongs to the protein-tyrosine phosphatase family. Non-receptor class dual specificity subfamily.</text>
</comment>
<evidence type="ECO:0000255" key="1">
    <source>
        <dbReference type="PROSITE-ProRule" id="PRU00160"/>
    </source>
</evidence>
<evidence type="ECO:0000255" key="2">
    <source>
        <dbReference type="PROSITE-ProRule" id="PRU00173"/>
    </source>
</evidence>
<evidence type="ECO:0000255" key="3">
    <source>
        <dbReference type="PROSITE-ProRule" id="PRU10044"/>
    </source>
</evidence>
<evidence type="ECO:0000269" key="4">
    <source>
    </source>
</evidence>
<evidence type="ECO:0000269" key="5">
    <source>
    </source>
</evidence>
<evidence type="ECO:0000305" key="6"/>
<evidence type="ECO:0000305" key="7">
    <source>
    </source>
</evidence>
<evidence type="ECO:0000312" key="8">
    <source>
        <dbReference type="MGI" id="MGI:101911"/>
    </source>
</evidence>
<keyword id="KW-0025">Alternative splicing</keyword>
<keyword id="KW-0378">Hydrolase</keyword>
<keyword id="KW-0539">Nucleus</keyword>
<keyword id="KW-0904">Protein phosphatase</keyword>
<keyword id="KW-1185">Reference proteome</keyword>
<name>DUSP2_MOUSE</name>
<reference key="1">
    <citation type="journal article" date="1993" name="Science">
        <title>PAC-1: a mitogen-induced nuclear protein tyrosine phosphatase.</title>
        <authorList>
            <person name="Rohan P."/>
            <person name="Davis P."/>
            <person name="Moskaluk C.A."/>
            <person name="Kearns M."/>
            <person name="Krutzsch H."/>
            <person name="Siebenlist U."/>
            <person name="Kelly K."/>
        </authorList>
    </citation>
    <scope>NUCLEOTIDE SEQUENCE [MRNA] (ISOFORM 1)</scope>
</reference>
<reference key="2">
    <citation type="journal article" date="1994" name="Genomics">
        <title>Structure of the gene encoding the murine dual specificity tyrosine-threonine phosphatase PAC1.</title>
        <authorList>
            <person name="Gerondakis S."/>
            <person name="Economou C."/>
            <person name="Grumont R.J."/>
        </authorList>
    </citation>
    <scope>NUCLEOTIDE SEQUENCE [GENOMIC DNA] (ISOFORM 2)</scope>
    <source>
        <strain>129</strain>
    </source>
</reference>
<reference key="3">
    <citation type="journal article" date="2005" name="Science">
        <title>The transcriptional landscape of the mammalian genome.</title>
        <authorList>
            <person name="Carninci P."/>
            <person name="Kasukawa T."/>
            <person name="Katayama S."/>
            <person name="Gough J."/>
            <person name="Frith M.C."/>
            <person name="Maeda N."/>
            <person name="Oyama R."/>
            <person name="Ravasi T."/>
            <person name="Lenhard B."/>
            <person name="Wells C."/>
            <person name="Kodzius R."/>
            <person name="Shimokawa K."/>
            <person name="Bajic V.B."/>
            <person name="Brenner S.E."/>
            <person name="Batalov S."/>
            <person name="Forrest A.R."/>
            <person name="Zavolan M."/>
            <person name="Davis M.J."/>
            <person name="Wilming L.G."/>
            <person name="Aidinis V."/>
            <person name="Allen J.E."/>
            <person name="Ambesi-Impiombato A."/>
            <person name="Apweiler R."/>
            <person name="Aturaliya R.N."/>
            <person name="Bailey T.L."/>
            <person name="Bansal M."/>
            <person name="Baxter L."/>
            <person name="Beisel K.W."/>
            <person name="Bersano T."/>
            <person name="Bono H."/>
            <person name="Chalk A.M."/>
            <person name="Chiu K.P."/>
            <person name="Choudhary V."/>
            <person name="Christoffels A."/>
            <person name="Clutterbuck D.R."/>
            <person name="Crowe M.L."/>
            <person name="Dalla E."/>
            <person name="Dalrymple B.P."/>
            <person name="de Bono B."/>
            <person name="Della Gatta G."/>
            <person name="di Bernardo D."/>
            <person name="Down T."/>
            <person name="Engstrom P."/>
            <person name="Fagiolini M."/>
            <person name="Faulkner G."/>
            <person name="Fletcher C.F."/>
            <person name="Fukushima T."/>
            <person name="Furuno M."/>
            <person name="Futaki S."/>
            <person name="Gariboldi M."/>
            <person name="Georgii-Hemming P."/>
            <person name="Gingeras T.R."/>
            <person name="Gojobori T."/>
            <person name="Green R.E."/>
            <person name="Gustincich S."/>
            <person name="Harbers M."/>
            <person name="Hayashi Y."/>
            <person name="Hensch T.K."/>
            <person name="Hirokawa N."/>
            <person name="Hill D."/>
            <person name="Huminiecki L."/>
            <person name="Iacono M."/>
            <person name="Ikeo K."/>
            <person name="Iwama A."/>
            <person name="Ishikawa T."/>
            <person name="Jakt M."/>
            <person name="Kanapin A."/>
            <person name="Katoh M."/>
            <person name="Kawasawa Y."/>
            <person name="Kelso J."/>
            <person name="Kitamura H."/>
            <person name="Kitano H."/>
            <person name="Kollias G."/>
            <person name="Krishnan S.P."/>
            <person name="Kruger A."/>
            <person name="Kummerfeld S.K."/>
            <person name="Kurochkin I.V."/>
            <person name="Lareau L.F."/>
            <person name="Lazarevic D."/>
            <person name="Lipovich L."/>
            <person name="Liu J."/>
            <person name="Liuni S."/>
            <person name="McWilliam S."/>
            <person name="Madan Babu M."/>
            <person name="Madera M."/>
            <person name="Marchionni L."/>
            <person name="Matsuda H."/>
            <person name="Matsuzawa S."/>
            <person name="Miki H."/>
            <person name="Mignone F."/>
            <person name="Miyake S."/>
            <person name="Morris K."/>
            <person name="Mottagui-Tabar S."/>
            <person name="Mulder N."/>
            <person name="Nakano N."/>
            <person name="Nakauchi H."/>
            <person name="Ng P."/>
            <person name="Nilsson R."/>
            <person name="Nishiguchi S."/>
            <person name="Nishikawa S."/>
            <person name="Nori F."/>
            <person name="Ohara O."/>
            <person name="Okazaki Y."/>
            <person name="Orlando V."/>
            <person name="Pang K.C."/>
            <person name="Pavan W.J."/>
            <person name="Pavesi G."/>
            <person name="Pesole G."/>
            <person name="Petrovsky N."/>
            <person name="Piazza S."/>
            <person name="Reed J."/>
            <person name="Reid J.F."/>
            <person name="Ring B.Z."/>
            <person name="Ringwald M."/>
            <person name="Rost B."/>
            <person name="Ruan Y."/>
            <person name="Salzberg S.L."/>
            <person name="Sandelin A."/>
            <person name="Schneider C."/>
            <person name="Schoenbach C."/>
            <person name="Sekiguchi K."/>
            <person name="Semple C.A."/>
            <person name="Seno S."/>
            <person name="Sessa L."/>
            <person name="Sheng Y."/>
            <person name="Shibata Y."/>
            <person name="Shimada H."/>
            <person name="Shimada K."/>
            <person name="Silva D."/>
            <person name="Sinclair B."/>
            <person name="Sperling S."/>
            <person name="Stupka E."/>
            <person name="Sugiura K."/>
            <person name="Sultana R."/>
            <person name="Takenaka Y."/>
            <person name="Taki K."/>
            <person name="Tammoja K."/>
            <person name="Tan S.L."/>
            <person name="Tang S."/>
            <person name="Taylor M.S."/>
            <person name="Tegner J."/>
            <person name="Teichmann S.A."/>
            <person name="Ueda H.R."/>
            <person name="van Nimwegen E."/>
            <person name="Verardo R."/>
            <person name="Wei C.L."/>
            <person name="Yagi K."/>
            <person name="Yamanishi H."/>
            <person name="Zabarovsky E."/>
            <person name="Zhu S."/>
            <person name="Zimmer A."/>
            <person name="Hide W."/>
            <person name="Bult C."/>
            <person name="Grimmond S.M."/>
            <person name="Teasdale R.D."/>
            <person name="Liu E.T."/>
            <person name="Brusic V."/>
            <person name="Quackenbush J."/>
            <person name="Wahlestedt C."/>
            <person name="Mattick J.S."/>
            <person name="Hume D.A."/>
            <person name="Kai C."/>
            <person name="Sasaki D."/>
            <person name="Tomaru Y."/>
            <person name="Fukuda S."/>
            <person name="Kanamori-Katayama M."/>
            <person name="Suzuki M."/>
            <person name="Aoki J."/>
            <person name="Arakawa T."/>
            <person name="Iida J."/>
            <person name="Imamura K."/>
            <person name="Itoh M."/>
            <person name="Kato T."/>
            <person name="Kawaji H."/>
            <person name="Kawagashira N."/>
            <person name="Kawashima T."/>
            <person name="Kojima M."/>
            <person name="Kondo S."/>
            <person name="Konno H."/>
            <person name="Nakano K."/>
            <person name="Ninomiya N."/>
            <person name="Nishio T."/>
            <person name="Okada M."/>
            <person name="Plessy C."/>
            <person name="Shibata K."/>
            <person name="Shiraki T."/>
            <person name="Suzuki S."/>
            <person name="Tagami M."/>
            <person name="Waki K."/>
            <person name="Watahiki A."/>
            <person name="Okamura-Oho Y."/>
            <person name="Suzuki H."/>
            <person name="Kawai J."/>
            <person name="Hayashizaki Y."/>
        </authorList>
    </citation>
    <scope>NUCLEOTIDE SEQUENCE [LARGE SCALE MRNA] (ISOFORM 1)</scope>
    <source>
        <strain>C57BL/6J</strain>
        <tissue>Thymus</tissue>
    </source>
</reference>
<reference key="4">
    <citation type="journal article" date="2009" name="PLoS Biol.">
        <title>Lineage-specific biology revealed by a finished genome assembly of the mouse.</title>
        <authorList>
            <person name="Church D.M."/>
            <person name="Goodstadt L."/>
            <person name="Hillier L.W."/>
            <person name="Zody M.C."/>
            <person name="Goldstein S."/>
            <person name="She X."/>
            <person name="Bult C.J."/>
            <person name="Agarwala R."/>
            <person name="Cherry J.L."/>
            <person name="DiCuccio M."/>
            <person name="Hlavina W."/>
            <person name="Kapustin Y."/>
            <person name="Meric P."/>
            <person name="Maglott D."/>
            <person name="Birtle Z."/>
            <person name="Marques A.C."/>
            <person name="Graves T."/>
            <person name="Zhou S."/>
            <person name="Teague B."/>
            <person name="Potamousis K."/>
            <person name="Churas C."/>
            <person name="Place M."/>
            <person name="Herschleb J."/>
            <person name="Runnheim R."/>
            <person name="Forrest D."/>
            <person name="Amos-Landgraf J."/>
            <person name="Schwartz D.C."/>
            <person name="Cheng Z."/>
            <person name="Lindblad-Toh K."/>
            <person name="Eichler E.E."/>
            <person name="Ponting C.P."/>
        </authorList>
    </citation>
    <scope>NUCLEOTIDE SEQUENCE [LARGE SCALE GENOMIC DNA]</scope>
    <source>
        <strain>C57BL/6J</strain>
    </source>
</reference>
<reference key="5">
    <citation type="journal article" date="2004" name="Genome Res.">
        <title>The status, quality, and expansion of the NIH full-length cDNA project: the Mammalian Gene Collection (MGC).</title>
        <authorList>
            <consortium name="The MGC Project Team"/>
        </authorList>
    </citation>
    <scope>NUCLEOTIDE SEQUENCE [LARGE SCALE MRNA] (ISOFORM 1)</scope>
    <source>
        <tissue>Limb</tissue>
    </source>
</reference>
<reference key="6">
    <citation type="journal article" date="2005" name="J. Mol. Biol.">
        <title>New insights into the catalytic activation of the MAPK phosphatase PAC-1 induced by its substrate MAPK ERK2 binding.</title>
        <authorList>
            <person name="Zhang Q."/>
            <person name="Muller M."/>
            <person name="Chen C.H."/>
            <person name="Zeng L."/>
            <person name="Farooq A."/>
            <person name="Zhou M.M."/>
        </authorList>
    </citation>
    <scope>FUNCTION</scope>
    <scope>CATALYTIC ACTIVITY</scope>
    <scope>INTERACTION WITH MAPK14</scope>
    <scope>MUTAGENESIS OF ARG-60; ARG-61; ARG-62; ASP-230; CYS-261; LYS-292; ARG-294 AND ARG-295</scope>
</reference>
<feature type="chain" id="PRO_0000094794" description="Dual specificity protein phosphatase 2">
    <location>
        <begin position="1"/>
        <end position="318"/>
    </location>
</feature>
<feature type="domain" description="Rhodanese" evidence="2">
    <location>
        <begin position="27"/>
        <end position="148"/>
    </location>
</feature>
<feature type="domain" description="Tyrosine-protein phosphatase" evidence="1">
    <location>
        <begin position="176"/>
        <end position="317"/>
    </location>
</feature>
<feature type="active site" description="Phosphocysteine intermediate" evidence="1">
    <location>
        <position position="261"/>
    </location>
</feature>
<feature type="splice variant" id="VSP_005135" description="In isoform 2." evidence="6">
    <original>GGPVE</original>
    <variation>VSSDL</variation>
    <location>
        <begin position="175"/>
        <end position="179"/>
    </location>
</feature>
<feature type="splice variant" id="VSP_005136" description="In isoform 2." evidence="6">
    <location>
        <begin position="180"/>
        <end position="318"/>
    </location>
</feature>
<feature type="mutagenesis site" description="Does not affect interaction with MAPK1." evidence="5">
    <original>R</original>
    <variation>A</variation>
    <location>
        <position position="60"/>
    </location>
</feature>
<feature type="mutagenesis site" description="Does not affect interaction with MAPK1. Loss of interaction with MAPK1; when associated with A-62." evidence="5">
    <original>R</original>
    <variation>A</variation>
    <location>
        <position position="61"/>
    </location>
</feature>
<feature type="mutagenesis site" description="Loss of interaction with MAPK1. Loss of interaction with MAPK1; when associated with A-61." evidence="5">
    <original>R</original>
    <variation>A</variation>
    <location>
        <position position="62"/>
    </location>
</feature>
<feature type="mutagenesis site" description="Loss of phosphatase activity." evidence="5">
    <original>D</original>
    <variation>A</variation>
    <location>
        <position position="230"/>
    </location>
</feature>
<feature type="mutagenesis site" description="Loss of phosphatase activity. Does not affect interaction with MAPK1." evidence="5">
    <original>C</original>
    <variation>S</variation>
    <location>
        <position position="261"/>
    </location>
</feature>
<feature type="mutagenesis site" description="Does not affect phosphatase activity. Loss of phosphatase activity; when associated with A-294 and A-295. Does not affect interaction with MAPK1." evidence="5">
    <original>K</original>
    <variation>A</variation>
    <location>
        <position position="292"/>
    </location>
</feature>
<feature type="mutagenesis site" description="Loss of phosphatase activity. Loss of phosphatase activity; when associated with A-292 and A-295. Does not affect interaction with MAPK1." evidence="5">
    <original>R</original>
    <variation>A</variation>
    <location>
        <position position="294"/>
    </location>
</feature>
<feature type="mutagenesis site" description="Loss of phosphatase activity." evidence="5">
    <original>R</original>
    <variation>K</variation>
    <location>
        <position position="294"/>
    </location>
</feature>
<feature type="mutagenesis site" description="Loss of phosphatase activity. Loss of phosphatase activity; when associated with A-292 and A-294. Does not affect interaction with MAPK1." evidence="5">
    <original>R</original>
    <variation>A</variation>
    <location>
        <position position="295"/>
    </location>
</feature>
<feature type="mutagenesis site" description="Loss of phosphatase activity." evidence="5">
    <original>R</original>
    <variation>K</variation>
    <location>
        <position position="295"/>
    </location>
</feature>
<feature type="sequence conflict" description="In Ref. 2; AAA85136." evidence="6" ref="2">
    <original>CE</original>
    <variation>WQ</variation>
    <location>
        <begin position="11"/>
        <end position="12"/>
    </location>
</feature>
<feature type="sequence conflict" description="In Ref. 2; AAA85136." evidence="6" ref="2">
    <original>A</original>
    <variation>V</variation>
    <location>
        <position position="20"/>
    </location>
</feature>
<feature type="sequence conflict" description="In Ref. 1; AAA19666 and 2; AAA85136." evidence="6" ref="1 2">
    <original>R</original>
    <variation>P</variation>
    <location>
        <position position="64"/>
    </location>
</feature>
<feature type="sequence conflict" description="In Ref. 1; AAA19666 and 2; AAA85136." evidence="6" ref="1 2">
    <original>A</original>
    <variation>T</variation>
    <location>
        <position position="103"/>
    </location>
</feature>
<feature type="sequence conflict" description="In Ref. 2; AAA85136." evidence="6" ref="2">
    <original>P</original>
    <variation>A</variation>
    <location>
        <position position="156"/>
    </location>
</feature>
<dbReference type="EC" id="3.1.3.16" evidence="4"/>
<dbReference type="EC" id="3.1.3.48" evidence="3 4"/>
<dbReference type="EMBL" id="L11330">
    <property type="protein sequence ID" value="AAA19666.1"/>
    <property type="molecule type" value="mRNA"/>
</dbReference>
<dbReference type="EMBL" id="U09268">
    <property type="protein sequence ID" value="AAA85136.1"/>
    <property type="molecule type" value="Genomic_DNA"/>
</dbReference>
<dbReference type="EMBL" id="AK134067">
    <property type="protein sequence ID" value="BAE21999.1"/>
    <property type="molecule type" value="mRNA"/>
</dbReference>
<dbReference type="EMBL" id="AL845368">
    <property type="status" value="NOT_ANNOTATED_CDS"/>
    <property type="molecule type" value="Genomic_DNA"/>
</dbReference>
<dbReference type="EMBL" id="BC048696">
    <property type="protein sequence ID" value="AAH48696.1"/>
    <property type="molecule type" value="mRNA"/>
</dbReference>
<dbReference type="CCDS" id="CCDS16699.1">
    <molecule id="Q05922-1"/>
</dbReference>
<dbReference type="PIR" id="B57126">
    <property type="entry name" value="B57126"/>
</dbReference>
<dbReference type="RefSeq" id="NP_034220.2">
    <molecule id="Q05922-1"/>
    <property type="nucleotide sequence ID" value="NM_010090.2"/>
</dbReference>
<dbReference type="SMR" id="Q05922"/>
<dbReference type="BioGRID" id="199340">
    <property type="interactions" value="3"/>
</dbReference>
<dbReference type="FunCoup" id="Q05922">
    <property type="interactions" value="1483"/>
</dbReference>
<dbReference type="IntAct" id="Q05922">
    <property type="interactions" value="2"/>
</dbReference>
<dbReference type="MINT" id="Q05922"/>
<dbReference type="STRING" id="10090.ENSMUSP00000028846"/>
<dbReference type="iPTMnet" id="Q05922"/>
<dbReference type="PhosphoSitePlus" id="Q05922"/>
<dbReference type="PaxDb" id="10090-ENSMUSP00000028846"/>
<dbReference type="ProteomicsDB" id="275413">
    <molecule id="Q05922-1"/>
</dbReference>
<dbReference type="Antibodypedia" id="54258">
    <property type="antibodies" value="90 antibodies from 23 providers"/>
</dbReference>
<dbReference type="DNASU" id="13537"/>
<dbReference type="Ensembl" id="ENSMUST00000028846.7">
    <molecule id="Q05922-1"/>
    <property type="protein sequence ID" value="ENSMUSP00000028846.7"/>
    <property type="gene ID" value="ENSMUSG00000027368.7"/>
</dbReference>
<dbReference type="GeneID" id="13537"/>
<dbReference type="KEGG" id="mmu:13537"/>
<dbReference type="UCSC" id="uc008mff.1">
    <molecule id="Q05922-1"/>
    <property type="organism name" value="mouse"/>
</dbReference>
<dbReference type="AGR" id="MGI:101911"/>
<dbReference type="CTD" id="1844"/>
<dbReference type="MGI" id="MGI:101911">
    <property type="gene designation" value="Dusp2"/>
</dbReference>
<dbReference type="VEuPathDB" id="HostDB:ENSMUSG00000027368"/>
<dbReference type="eggNOG" id="KOG1716">
    <property type="taxonomic scope" value="Eukaryota"/>
</dbReference>
<dbReference type="GeneTree" id="ENSGT00940000161605"/>
<dbReference type="HOGENOM" id="CLU_027074_0_2_1"/>
<dbReference type="InParanoid" id="Q05922"/>
<dbReference type="OMA" id="EARPVHW"/>
<dbReference type="OrthoDB" id="165342at2759"/>
<dbReference type="PhylomeDB" id="Q05922"/>
<dbReference type="TreeFam" id="TF105122"/>
<dbReference type="Reactome" id="R-MMU-112409">
    <property type="pathway name" value="RAF-independent MAPK1/3 activation"/>
</dbReference>
<dbReference type="Reactome" id="R-MMU-5675221">
    <property type="pathway name" value="Negative regulation of MAPK pathway"/>
</dbReference>
<dbReference type="BioGRID-ORCS" id="13537">
    <property type="hits" value="1 hit in 79 CRISPR screens"/>
</dbReference>
<dbReference type="ChiTaRS" id="Dusp2">
    <property type="organism name" value="mouse"/>
</dbReference>
<dbReference type="PRO" id="PR:Q05922"/>
<dbReference type="Proteomes" id="UP000000589">
    <property type="component" value="Chromosome 2"/>
</dbReference>
<dbReference type="RNAct" id="Q05922">
    <property type="molecule type" value="protein"/>
</dbReference>
<dbReference type="Bgee" id="ENSMUSG00000027368">
    <property type="expression patterns" value="Expressed in peripheral lymph node and 114 other cell types or tissues"/>
</dbReference>
<dbReference type="GO" id="GO:0031965">
    <property type="term" value="C:nuclear membrane"/>
    <property type="evidence" value="ECO:0007669"/>
    <property type="project" value="Ensembl"/>
</dbReference>
<dbReference type="GO" id="GO:0005654">
    <property type="term" value="C:nucleoplasm"/>
    <property type="evidence" value="ECO:0007669"/>
    <property type="project" value="Ensembl"/>
</dbReference>
<dbReference type="GO" id="GO:0017017">
    <property type="term" value="F:MAP kinase tyrosine/serine/threonine phosphatase activity"/>
    <property type="evidence" value="ECO:0007669"/>
    <property type="project" value="InterPro"/>
</dbReference>
<dbReference type="GO" id="GO:0051019">
    <property type="term" value="F:mitogen-activated protein kinase binding"/>
    <property type="evidence" value="ECO:0000353"/>
    <property type="project" value="MGI"/>
</dbReference>
<dbReference type="GO" id="GO:0004721">
    <property type="term" value="F:phosphoprotein phosphatase activity"/>
    <property type="evidence" value="ECO:0000314"/>
    <property type="project" value="MGI"/>
</dbReference>
<dbReference type="GO" id="GO:0004722">
    <property type="term" value="F:protein serine/threonine phosphatase activity"/>
    <property type="evidence" value="ECO:0007669"/>
    <property type="project" value="UniProtKB-EC"/>
</dbReference>
<dbReference type="GO" id="GO:0004725">
    <property type="term" value="F:protein tyrosine phosphatase activity"/>
    <property type="evidence" value="ECO:0007669"/>
    <property type="project" value="UniProtKB-EC"/>
</dbReference>
<dbReference type="CDD" id="cd14641">
    <property type="entry name" value="DSP_DUSP2"/>
    <property type="match status" value="1"/>
</dbReference>
<dbReference type="CDD" id="cd01446">
    <property type="entry name" value="DSP_MapKP"/>
    <property type="match status" value="1"/>
</dbReference>
<dbReference type="FunFam" id="3.40.250.10:FF:000034">
    <property type="entry name" value="Dual specificity phosphatase 2"/>
    <property type="match status" value="1"/>
</dbReference>
<dbReference type="FunFam" id="3.90.190.10:FF:000015">
    <property type="entry name" value="Dual specificity phosphatase 4"/>
    <property type="match status" value="1"/>
</dbReference>
<dbReference type="Gene3D" id="3.90.190.10">
    <property type="entry name" value="Protein tyrosine phosphatase superfamily"/>
    <property type="match status" value="1"/>
</dbReference>
<dbReference type="Gene3D" id="3.40.250.10">
    <property type="entry name" value="Rhodanese-like domain"/>
    <property type="match status" value="1"/>
</dbReference>
<dbReference type="InterPro" id="IPR000340">
    <property type="entry name" value="Dual-sp_phosphatase_cat-dom"/>
</dbReference>
<dbReference type="InterPro" id="IPR008343">
    <property type="entry name" value="MKP"/>
</dbReference>
<dbReference type="InterPro" id="IPR029021">
    <property type="entry name" value="Prot-tyrosine_phosphatase-like"/>
</dbReference>
<dbReference type="InterPro" id="IPR001763">
    <property type="entry name" value="Rhodanese-like_dom"/>
</dbReference>
<dbReference type="InterPro" id="IPR036873">
    <property type="entry name" value="Rhodanese-like_dom_sf"/>
</dbReference>
<dbReference type="InterPro" id="IPR016130">
    <property type="entry name" value="Tyr_Pase_AS"/>
</dbReference>
<dbReference type="InterPro" id="IPR003595">
    <property type="entry name" value="Tyr_Pase_cat"/>
</dbReference>
<dbReference type="InterPro" id="IPR000387">
    <property type="entry name" value="Tyr_Pase_dom"/>
</dbReference>
<dbReference type="InterPro" id="IPR020422">
    <property type="entry name" value="TYR_PHOSPHATASE_DUAL_dom"/>
</dbReference>
<dbReference type="PANTHER" id="PTHR10159">
    <property type="entry name" value="DUAL SPECIFICITY PROTEIN PHOSPHATASE"/>
    <property type="match status" value="1"/>
</dbReference>
<dbReference type="PANTHER" id="PTHR10159:SF109">
    <property type="entry name" value="DUAL SPECIFICITY PROTEIN PHOSPHATASE 2"/>
    <property type="match status" value="1"/>
</dbReference>
<dbReference type="Pfam" id="PF00782">
    <property type="entry name" value="DSPc"/>
    <property type="match status" value="1"/>
</dbReference>
<dbReference type="Pfam" id="PF00581">
    <property type="entry name" value="Rhodanese"/>
    <property type="match status" value="1"/>
</dbReference>
<dbReference type="PIRSF" id="PIRSF000939">
    <property type="entry name" value="MAPK_Ptase"/>
    <property type="match status" value="1"/>
</dbReference>
<dbReference type="PRINTS" id="PR01908">
    <property type="entry name" value="ADSPHPHTASE"/>
</dbReference>
<dbReference type="PRINTS" id="PR01764">
    <property type="entry name" value="MAPKPHPHTASE"/>
</dbReference>
<dbReference type="SMART" id="SM00195">
    <property type="entry name" value="DSPc"/>
    <property type="match status" value="1"/>
</dbReference>
<dbReference type="SMART" id="SM00404">
    <property type="entry name" value="PTPc_motif"/>
    <property type="match status" value="1"/>
</dbReference>
<dbReference type="SMART" id="SM00450">
    <property type="entry name" value="RHOD"/>
    <property type="match status" value="1"/>
</dbReference>
<dbReference type="SUPFAM" id="SSF52799">
    <property type="entry name" value="(Phosphotyrosine protein) phosphatases II"/>
    <property type="match status" value="1"/>
</dbReference>
<dbReference type="SUPFAM" id="SSF52821">
    <property type="entry name" value="Rhodanese/Cell cycle control phosphatase"/>
    <property type="match status" value="1"/>
</dbReference>
<dbReference type="PROSITE" id="PS50206">
    <property type="entry name" value="RHODANESE_3"/>
    <property type="match status" value="1"/>
</dbReference>
<dbReference type="PROSITE" id="PS00383">
    <property type="entry name" value="TYR_PHOSPHATASE_1"/>
    <property type="match status" value="1"/>
</dbReference>
<dbReference type="PROSITE" id="PS50056">
    <property type="entry name" value="TYR_PHOSPHATASE_2"/>
    <property type="match status" value="1"/>
</dbReference>
<dbReference type="PROSITE" id="PS50054">
    <property type="entry name" value="TYR_PHOSPHATASE_DUAL"/>
    <property type="match status" value="1"/>
</dbReference>